<feature type="chain" id="PRO_0000370859" description="Adipocyte plasma membrane-associated protein">
    <location>
        <begin position="1"/>
        <end position="415"/>
    </location>
</feature>
<feature type="topological domain" description="Cytoplasmic" evidence="2">
    <location>
        <begin position="1"/>
        <end position="39"/>
    </location>
</feature>
<feature type="transmembrane region" description="Helical" evidence="2">
    <location>
        <begin position="40"/>
        <end position="60"/>
    </location>
</feature>
<feature type="topological domain" description="Extracellular" evidence="2">
    <location>
        <begin position="61"/>
        <end position="412"/>
    </location>
</feature>
<feature type="region of interest" description="Disordered" evidence="3">
    <location>
        <begin position="1"/>
        <end position="30"/>
    </location>
</feature>
<feature type="glycosylation site" description="N-linked (GlcNAc...) asparagine" evidence="2">
    <location>
        <position position="159"/>
    </location>
</feature>
<accession>Q5ZIF1</accession>
<sequence>MNEAEGLRQRRPLRPQVITEDSPAQEAKEGSAYSSKVFRVTFLTLAASLAVPLLGATVLLDCPIDPQPISLKEPPLLTGVLEPNNKLQKAERLWENQLVGPESIVNIGDVLFTGTADGKILKIEDGEVQTVARIGHGPCGTPEDEPTCGRPLGIRVGPNNTLFVADAYYGLYEVNPGTGETKMLVSTKTLIEGQKLSFLNDLTVTQDGRKIYFTDSSSKWQRRDFLFLVMEGTDDGRLLEYDTVTKEVKVLMVGLRFPNGVQLSPAEDFVLVLETAMARIRRYYVSGLMKGGADMFVENMPGLPDNIRLSSSGGYWVAMPVVRPNPGFSMLDFLSEKPWIKRMIFKLLSQETVTKLLPKRSLVVELSETGSYRRSFHDPTGLTVPYVSEAHEHNGYLYLGSFRSPFICRLNLQHV</sequence>
<proteinExistence type="evidence at transcript level"/>
<evidence type="ECO:0000250" key="1"/>
<evidence type="ECO:0000255" key="2"/>
<evidence type="ECO:0000256" key="3">
    <source>
        <dbReference type="SAM" id="MobiDB-lite"/>
    </source>
</evidence>
<evidence type="ECO:0000305" key="4"/>
<protein>
    <recommendedName>
        <fullName>Adipocyte plasma membrane-associated protein</fullName>
    </recommendedName>
</protein>
<comment type="subcellular location">
    <subcellularLocation>
        <location evidence="1">Membrane</location>
        <topology evidence="1">Single-pass type II membrane protein</topology>
    </subcellularLocation>
</comment>
<comment type="similarity">
    <text evidence="4">Belongs to the strictosidine synthase family.</text>
</comment>
<keyword id="KW-0325">Glycoprotein</keyword>
<keyword id="KW-0472">Membrane</keyword>
<keyword id="KW-1185">Reference proteome</keyword>
<keyword id="KW-0735">Signal-anchor</keyword>
<keyword id="KW-0812">Transmembrane</keyword>
<keyword id="KW-1133">Transmembrane helix</keyword>
<name>APMAP_CHICK</name>
<gene>
    <name type="primary">APMAP</name>
    <name type="ORF">RCJMB04_27f14</name>
</gene>
<dbReference type="EMBL" id="AJ720833">
    <property type="protein sequence ID" value="CAG32492.1"/>
    <property type="molecule type" value="mRNA"/>
</dbReference>
<dbReference type="RefSeq" id="NP_001006177.1">
    <property type="nucleotide sequence ID" value="NM_001006177.2"/>
</dbReference>
<dbReference type="SMR" id="Q5ZIF1"/>
<dbReference type="FunCoup" id="Q5ZIF1">
    <property type="interactions" value="2012"/>
</dbReference>
<dbReference type="STRING" id="9031.ENSGALP00000014075"/>
<dbReference type="GlyCosmos" id="Q5ZIF1">
    <property type="glycosylation" value="1 site, No reported glycans"/>
</dbReference>
<dbReference type="GlyGen" id="Q5ZIF1">
    <property type="glycosylation" value="1 site"/>
</dbReference>
<dbReference type="PaxDb" id="9031-ENSGALP00000014075"/>
<dbReference type="Ensembl" id="ENSGALT00010045675.1">
    <property type="protein sequence ID" value="ENSGALP00010027233.1"/>
    <property type="gene ID" value="ENSGALG00010018892.1"/>
</dbReference>
<dbReference type="GeneID" id="416715"/>
<dbReference type="KEGG" id="gga:416715"/>
<dbReference type="CTD" id="57136"/>
<dbReference type="VEuPathDB" id="HostDB:geneid_416715"/>
<dbReference type="eggNOG" id="KOG1520">
    <property type="taxonomic scope" value="Eukaryota"/>
</dbReference>
<dbReference type="GeneTree" id="ENSGT00440000039984"/>
<dbReference type="HOGENOM" id="CLU_023267_0_0_1"/>
<dbReference type="InParanoid" id="Q5ZIF1"/>
<dbReference type="OMA" id="CCRTRAQ"/>
<dbReference type="OrthoDB" id="5307922at2759"/>
<dbReference type="PhylomeDB" id="Q5ZIF1"/>
<dbReference type="PRO" id="PR:Q5ZIF1"/>
<dbReference type="Proteomes" id="UP000000539">
    <property type="component" value="Chromosome 3"/>
</dbReference>
<dbReference type="Bgee" id="ENSGALG00000008651">
    <property type="expression patterns" value="Expressed in liver and 12 other cell types or tissues"/>
</dbReference>
<dbReference type="GO" id="GO:0009986">
    <property type="term" value="C:cell surface"/>
    <property type="evidence" value="ECO:0007669"/>
    <property type="project" value="Ensembl"/>
</dbReference>
<dbReference type="GO" id="GO:0016020">
    <property type="term" value="C:membrane"/>
    <property type="evidence" value="ECO:0007669"/>
    <property type="project" value="UniProtKB-SubCell"/>
</dbReference>
<dbReference type="GO" id="GO:0004064">
    <property type="term" value="F:arylesterase activity"/>
    <property type="evidence" value="ECO:0000318"/>
    <property type="project" value="GO_Central"/>
</dbReference>
<dbReference type="FunFam" id="2.120.10.30:FF:000041">
    <property type="entry name" value="adipocyte plasma membrane-associated protein"/>
    <property type="match status" value="1"/>
</dbReference>
<dbReference type="Gene3D" id="2.120.10.30">
    <property type="entry name" value="TolB, C-terminal domain"/>
    <property type="match status" value="1"/>
</dbReference>
<dbReference type="InterPro" id="IPR011042">
    <property type="entry name" value="6-blade_b-propeller_TolB-like"/>
</dbReference>
<dbReference type="InterPro" id="IPR018119">
    <property type="entry name" value="Strictosidine_synth_cons-reg"/>
</dbReference>
<dbReference type="PANTHER" id="PTHR10426:SF130">
    <property type="entry name" value="ADIPOCYTE PLASMA MEMBRANE-ASSOCIATED PROTEIN"/>
    <property type="match status" value="1"/>
</dbReference>
<dbReference type="PANTHER" id="PTHR10426">
    <property type="entry name" value="STRICTOSIDINE SYNTHASE-RELATED"/>
    <property type="match status" value="1"/>
</dbReference>
<dbReference type="Pfam" id="PF20067">
    <property type="entry name" value="SSL_N"/>
    <property type="match status" value="1"/>
</dbReference>
<dbReference type="Pfam" id="PF03088">
    <property type="entry name" value="Str_synth"/>
    <property type="match status" value="1"/>
</dbReference>
<dbReference type="SUPFAM" id="SSF63829">
    <property type="entry name" value="Calcium-dependent phosphotriesterase"/>
    <property type="match status" value="1"/>
</dbReference>
<reference key="1">
    <citation type="journal article" date="2005" name="Genome Biol.">
        <title>Full-length cDNAs from chicken bursal lymphocytes to facilitate gene function analysis.</title>
        <authorList>
            <person name="Caldwell R.B."/>
            <person name="Kierzek A.M."/>
            <person name="Arakawa H."/>
            <person name="Bezzubov Y."/>
            <person name="Zaim J."/>
            <person name="Fiedler P."/>
            <person name="Kutter S."/>
            <person name="Blagodatski A."/>
            <person name="Kostovska D."/>
            <person name="Koter M."/>
            <person name="Plachy J."/>
            <person name="Carninci P."/>
            <person name="Hayashizaki Y."/>
            <person name="Buerstedde J.-M."/>
        </authorList>
    </citation>
    <scope>NUCLEOTIDE SEQUENCE [LARGE SCALE MRNA]</scope>
    <source>
        <strain>CB</strain>
        <tissue>Bursa of Fabricius</tissue>
    </source>
</reference>
<organism>
    <name type="scientific">Gallus gallus</name>
    <name type="common">Chicken</name>
    <dbReference type="NCBI Taxonomy" id="9031"/>
    <lineage>
        <taxon>Eukaryota</taxon>
        <taxon>Metazoa</taxon>
        <taxon>Chordata</taxon>
        <taxon>Craniata</taxon>
        <taxon>Vertebrata</taxon>
        <taxon>Euteleostomi</taxon>
        <taxon>Archelosauria</taxon>
        <taxon>Archosauria</taxon>
        <taxon>Dinosauria</taxon>
        <taxon>Saurischia</taxon>
        <taxon>Theropoda</taxon>
        <taxon>Coelurosauria</taxon>
        <taxon>Aves</taxon>
        <taxon>Neognathae</taxon>
        <taxon>Galloanserae</taxon>
        <taxon>Galliformes</taxon>
        <taxon>Phasianidae</taxon>
        <taxon>Phasianinae</taxon>
        <taxon>Gallus</taxon>
    </lineage>
</organism>